<accession>A6TAC8</accession>
<organism>
    <name type="scientific">Klebsiella pneumoniae subsp. pneumoniae (strain ATCC 700721 / MGH 78578)</name>
    <dbReference type="NCBI Taxonomy" id="272620"/>
    <lineage>
        <taxon>Bacteria</taxon>
        <taxon>Pseudomonadati</taxon>
        <taxon>Pseudomonadota</taxon>
        <taxon>Gammaproteobacteria</taxon>
        <taxon>Enterobacterales</taxon>
        <taxon>Enterobacteriaceae</taxon>
        <taxon>Klebsiella/Raoultella group</taxon>
        <taxon>Klebsiella</taxon>
        <taxon>Klebsiella pneumoniae complex</taxon>
    </lineage>
</organism>
<protein>
    <recommendedName>
        <fullName evidence="1">2,3-dihydroxyphenylpropionate/2,3-dihydroxicinnamic acid 1,2-dioxygenase</fullName>
        <ecNumber evidence="1">1.13.11.16</ecNumber>
    </recommendedName>
    <alternativeName>
        <fullName evidence="1">3-carboxyethylcatechol 2,3-dioxygenase</fullName>
    </alternativeName>
</protein>
<proteinExistence type="inferred from homology"/>
<feature type="chain" id="PRO_0000337652" description="2,3-dihydroxyphenylpropionate/2,3-dihydroxicinnamic acid 1,2-dioxygenase">
    <location>
        <begin position="1"/>
        <end position="314"/>
    </location>
</feature>
<feature type="active site" description="Proton donor" evidence="1">
    <location>
        <position position="115"/>
    </location>
</feature>
<feature type="active site" description="Proton acceptor" evidence="1">
    <location>
        <position position="179"/>
    </location>
</feature>
<keyword id="KW-0058">Aromatic hydrocarbons catabolism</keyword>
<keyword id="KW-0223">Dioxygenase</keyword>
<keyword id="KW-0408">Iron</keyword>
<keyword id="KW-0560">Oxidoreductase</keyword>
<evidence type="ECO:0000255" key="1">
    <source>
        <dbReference type="HAMAP-Rule" id="MF_01653"/>
    </source>
</evidence>
<dbReference type="EC" id="1.13.11.16" evidence="1"/>
<dbReference type="EMBL" id="CP000647">
    <property type="protein sequence ID" value="ABR77549.1"/>
    <property type="molecule type" value="Genomic_DNA"/>
</dbReference>
<dbReference type="RefSeq" id="WP_004148696.1">
    <property type="nucleotide sequence ID" value="NC_009648.1"/>
</dbReference>
<dbReference type="SMR" id="A6TAC8"/>
<dbReference type="STRING" id="272620.KPN_02121"/>
<dbReference type="PaxDb" id="272620-KPN_02121"/>
<dbReference type="EnsemblBacteria" id="ABR77549">
    <property type="protein sequence ID" value="ABR77549"/>
    <property type="gene ID" value="KPN_02121"/>
</dbReference>
<dbReference type="KEGG" id="kpn:KPN_02121"/>
<dbReference type="HOGENOM" id="CLU_078149_0_0_6"/>
<dbReference type="UniPathway" id="UPA00714"/>
<dbReference type="Proteomes" id="UP000000265">
    <property type="component" value="Chromosome"/>
</dbReference>
<dbReference type="GO" id="GO:0047070">
    <property type="term" value="F:3-carboxyethylcatechol 2,3-dioxygenase activity"/>
    <property type="evidence" value="ECO:0007669"/>
    <property type="project" value="UniProtKB-UniRule"/>
</dbReference>
<dbReference type="GO" id="GO:0008198">
    <property type="term" value="F:ferrous iron binding"/>
    <property type="evidence" value="ECO:0007669"/>
    <property type="project" value="InterPro"/>
</dbReference>
<dbReference type="GO" id="GO:0019380">
    <property type="term" value="P:3-phenylpropionate catabolic process"/>
    <property type="evidence" value="ECO:0007669"/>
    <property type="project" value="UniProtKB-UniRule"/>
</dbReference>
<dbReference type="CDD" id="cd07365">
    <property type="entry name" value="MhpB_like"/>
    <property type="match status" value="1"/>
</dbReference>
<dbReference type="Gene3D" id="3.40.830.10">
    <property type="entry name" value="LigB-like"/>
    <property type="match status" value="1"/>
</dbReference>
<dbReference type="HAMAP" id="MF_01653">
    <property type="entry name" value="MhpB"/>
    <property type="match status" value="1"/>
</dbReference>
<dbReference type="InterPro" id="IPR023789">
    <property type="entry name" value="DHPP/DHXA_dioxygenase"/>
</dbReference>
<dbReference type="InterPro" id="IPR004183">
    <property type="entry name" value="Xdiol_dOase_suB"/>
</dbReference>
<dbReference type="NCBIfam" id="NF009907">
    <property type="entry name" value="PRK13370.1-1"/>
    <property type="match status" value="1"/>
</dbReference>
<dbReference type="NCBIfam" id="NF009910">
    <property type="entry name" value="PRK13370.1-4"/>
    <property type="match status" value="1"/>
</dbReference>
<dbReference type="Pfam" id="PF02900">
    <property type="entry name" value="LigB"/>
    <property type="match status" value="1"/>
</dbReference>
<dbReference type="SUPFAM" id="SSF53213">
    <property type="entry name" value="LigB-like"/>
    <property type="match status" value="1"/>
</dbReference>
<name>MHPB_KLEP7</name>
<gene>
    <name evidence="1" type="primary">mhpB</name>
    <name type="ordered locus">KPN78578_20880</name>
    <name type="ORF">KPN_02121</name>
</gene>
<comment type="function">
    <text evidence="1">Catalyzes the non-heme iron(II)-dependent oxidative cleavage of 2,3-dihydroxyphenylpropionic acid and 2,3-dihydroxicinnamic acid into 2-hydroxy-6-ketononadienedioate and 2-hydroxy-6-ketononatrienedioate, respectively.</text>
</comment>
<comment type="catalytic activity">
    <reaction evidence="1">
        <text>3-(2,3-dihydroxyphenyl)propanoate + O2 = (2Z,4E)-2-hydroxy-6-oxonona-2,4-dienedioate + H(+)</text>
        <dbReference type="Rhea" id="RHEA:23840"/>
        <dbReference type="ChEBI" id="CHEBI:15378"/>
        <dbReference type="ChEBI" id="CHEBI:15379"/>
        <dbReference type="ChEBI" id="CHEBI:46951"/>
        <dbReference type="ChEBI" id="CHEBI:66887"/>
        <dbReference type="EC" id="1.13.11.16"/>
    </reaction>
</comment>
<comment type="catalytic activity">
    <reaction evidence="1">
        <text>(2E)-3-(2,3-dihydroxyphenyl)prop-2-enoate + O2 = (2Z,4E,7E)-2-hydroxy-6-oxonona-2,4,7-trienedioate + H(+)</text>
        <dbReference type="Rhea" id="RHEA:25054"/>
        <dbReference type="ChEBI" id="CHEBI:15378"/>
        <dbReference type="ChEBI" id="CHEBI:15379"/>
        <dbReference type="ChEBI" id="CHEBI:58642"/>
        <dbReference type="ChEBI" id="CHEBI:66888"/>
        <dbReference type="EC" id="1.13.11.16"/>
    </reaction>
</comment>
<comment type="cofactor">
    <cofactor evidence="1">
        <name>Fe(2+)</name>
        <dbReference type="ChEBI" id="CHEBI:29033"/>
    </cofactor>
</comment>
<comment type="pathway">
    <text evidence="1">Aromatic compound metabolism; 3-phenylpropanoate degradation.</text>
</comment>
<comment type="subunit">
    <text evidence="1">Homotetramer.</text>
</comment>
<comment type="similarity">
    <text evidence="1">Belongs to the LigB/MhpB extradiol dioxygenase family.</text>
</comment>
<sequence>MHAYLHCLSHTPLVGFVDPEQAVLDEVNRVIADARRRIAEFDPELVVLFAPDHYNGFFYDVMPPFCLGIGATAIGDFASAAGDLPVPAELAEACAHAILNSGIDLAVSYNMQVDHGFAQPLEFLLGGLDRVPVLPVFINGVAAPLPGFQRTRLLGEAMGRFLNTLNKRVLILGSGGLSHQPPVPELAKADAHLRDRLLGGGKQLPPDERERRQQRVISAARRFTEDPHSLHPLNPVWDNRFMSLLEQGRLSELDAIGNDELSAMAGKSTHEIKTWVAAFAALSAFGRWRSEGRYYRPIPEWIAGFGSLSATTEI</sequence>
<reference key="1">
    <citation type="submission" date="2006-09" db="EMBL/GenBank/DDBJ databases">
        <authorList>
            <consortium name="The Klebsiella pneumonia Genome Sequencing Project"/>
            <person name="McClelland M."/>
            <person name="Sanderson E.K."/>
            <person name="Spieth J."/>
            <person name="Clifton W.S."/>
            <person name="Latreille P."/>
            <person name="Sabo A."/>
            <person name="Pepin K."/>
            <person name="Bhonagiri V."/>
            <person name="Porwollik S."/>
            <person name="Ali J."/>
            <person name="Wilson R.K."/>
        </authorList>
    </citation>
    <scope>NUCLEOTIDE SEQUENCE [LARGE SCALE GENOMIC DNA]</scope>
    <source>
        <strain>ATCC 700721 / MGH 78578</strain>
    </source>
</reference>